<accession>Q65JI1</accession>
<accession>Q62UY6</accession>
<sequence>MAKMRVYEYAKAINVSSKDIIAALKDMNIEVNNHMAMIEENAIKQLDQKFKKSAKPAGNKKDAGTGGQKPQQEAAKLNAGSKPNKNRDGKKNNVQNTQFNNKNKKKNNNNKKNKRGKNHQSPQEKQFKPKKELPEKIEFTNSMSVGALAEELGKEPSEIIKKLMLLGIMATINQDLDKDTVELIASEYGVEVEEVIVHEETEFEKYEEPDNEEDLEIRPPVVTIMGHVDHGKTTLLDSIRKTKVVEGEAGGITQHIGAYQIEENGKKITFLDTPGHAAFTTMRARGAEVTDITILVVAADDGVMPQTVEAINHAKAAEVPIIVAVNKIDKPTANPDRVMQELTEHGLVPEAWGGETIFVPLSALSGEGIDELIEMILLVSEVEELKANPNRRAKGTVIEAELDKGKGSVATLLVQNGTLHVGDPIVVGNTFGRVRAMVNDVGRRVKSAGPSTPVEITGLNEVPNAGDQFLVFKDEKTARSVGEARATKQLEEQRSDKAKLSLDDLFEQIKQGDVKEINLVVKADVQGSVEALAAALQKIEVEGVRVKIIHTGVGAITESDIILASASNAIVIGFNVRPDGNAKSTAEAENVDIRLHRIIYKVIDEIEAAMKGMLDPEYEEKVIGMVEVRQTFKVSKIGTIAGGYVTEGTITRDSGIRLIRDGVVIFEGEVDVLKRFKDDVKEVSQGYECGITIKKYNDIREGDMIEAYVMQEIERK</sequence>
<proteinExistence type="inferred from homology"/>
<feature type="chain" id="PRO_0000228166" description="Translation initiation factor IF-2">
    <location>
        <begin position="1"/>
        <end position="716"/>
    </location>
</feature>
<feature type="domain" description="tr-type G">
    <location>
        <begin position="217"/>
        <end position="386"/>
    </location>
</feature>
<feature type="region of interest" description="Disordered" evidence="3">
    <location>
        <begin position="50"/>
        <end position="137"/>
    </location>
</feature>
<feature type="region of interest" description="G1" evidence="1">
    <location>
        <begin position="226"/>
        <end position="233"/>
    </location>
</feature>
<feature type="region of interest" description="G2" evidence="1">
    <location>
        <begin position="251"/>
        <end position="255"/>
    </location>
</feature>
<feature type="region of interest" description="G3" evidence="1">
    <location>
        <begin position="272"/>
        <end position="275"/>
    </location>
</feature>
<feature type="region of interest" description="G4" evidence="1">
    <location>
        <begin position="326"/>
        <end position="329"/>
    </location>
</feature>
<feature type="region of interest" description="G5" evidence="1">
    <location>
        <begin position="362"/>
        <end position="364"/>
    </location>
</feature>
<feature type="compositionally biased region" description="Low complexity" evidence="3">
    <location>
        <begin position="92"/>
        <end position="101"/>
    </location>
</feature>
<feature type="compositionally biased region" description="Basic residues" evidence="3">
    <location>
        <begin position="102"/>
        <end position="118"/>
    </location>
</feature>
<feature type="compositionally biased region" description="Basic and acidic residues" evidence="3">
    <location>
        <begin position="125"/>
        <end position="137"/>
    </location>
</feature>
<feature type="binding site" evidence="2">
    <location>
        <begin position="226"/>
        <end position="233"/>
    </location>
    <ligand>
        <name>GTP</name>
        <dbReference type="ChEBI" id="CHEBI:37565"/>
    </ligand>
</feature>
<feature type="binding site" evidence="2">
    <location>
        <begin position="272"/>
        <end position="276"/>
    </location>
    <ligand>
        <name>GTP</name>
        <dbReference type="ChEBI" id="CHEBI:37565"/>
    </ligand>
</feature>
<feature type="binding site" evidence="2">
    <location>
        <begin position="326"/>
        <end position="329"/>
    </location>
    <ligand>
        <name>GTP</name>
        <dbReference type="ChEBI" id="CHEBI:37565"/>
    </ligand>
</feature>
<comment type="function">
    <text evidence="2">One of the essential components for the initiation of protein synthesis. Protects formylmethionyl-tRNA from spontaneous hydrolysis and promotes its binding to the 30S ribosomal subunits. Also involved in the hydrolysis of GTP during the formation of the 70S ribosomal complex.</text>
</comment>
<comment type="subcellular location">
    <subcellularLocation>
        <location evidence="2">Cytoplasm</location>
    </subcellularLocation>
</comment>
<comment type="similarity">
    <text evidence="2">Belongs to the TRAFAC class translation factor GTPase superfamily. Classic translation factor GTPase family. IF-2 subfamily.</text>
</comment>
<name>IF2_BACLD</name>
<dbReference type="EMBL" id="AE017333">
    <property type="protein sequence ID" value="AAU40783.1"/>
    <property type="molecule type" value="Genomic_DNA"/>
</dbReference>
<dbReference type="EMBL" id="CP000002">
    <property type="protein sequence ID" value="AAU23423.1"/>
    <property type="molecule type" value="Genomic_DNA"/>
</dbReference>
<dbReference type="RefSeq" id="WP_009328498.1">
    <property type="nucleotide sequence ID" value="NC_006322.1"/>
</dbReference>
<dbReference type="SMR" id="Q65JI1"/>
<dbReference type="STRING" id="279010.BL01224"/>
<dbReference type="GeneID" id="92861519"/>
<dbReference type="KEGG" id="bld:BLi01888"/>
<dbReference type="KEGG" id="bli:BL01224"/>
<dbReference type="eggNOG" id="COG0532">
    <property type="taxonomic scope" value="Bacteria"/>
</dbReference>
<dbReference type="HOGENOM" id="CLU_006301_5_1_9"/>
<dbReference type="Proteomes" id="UP000000606">
    <property type="component" value="Chromosome"/>
</dbReference>
<dbReference type="GO" id="GO:0005829">
    <property type="term" value="C:cytosol"/>
    <property type="evidence" value="ECO:0007669"/>
    <property type="project" value="TreeGrafter"/>
</dbReference>
<dbReference type="GO" id="GO:0005525">
    <property type="term" value="F:GTP binding"/>
    <property type="evidence" value="ECO:0007669"/>
    <property type="project" value="UniProtKB-KW"/>
</dbReference>
<dbReference type="GO" id="GO:0003924">
    <property type="term" value="F:GTPase activity"/>
    <property type="evidence" value="ECO:0007669"/>
    <property type="project" value="UniProtKB-UniRule"/>
</dbReference>
<dbReference type="GO" id="GO:0003743">
    <property type="term" value="F:translation initiation factor activity"/>
    <property type="evidence" value="ECO:0007669"/>
    <property type="project" value="UniProtKB-UniRule"/>
</dbReference>
<dbReference type="CDD" id="cd01887">
    <property type="entry name" value="IF2_eIF5B"/>
    <property type="match status" value="1"/>
</dbReference>
<dbReference type="CDD" id="cd03702">
    <property type="entry name" value="IF2_mtIF2_II"/>
    <property type="match status" value="1"/>
</dbReference>
<dbReference type="CDD" id="cd03692">
    <property type="entry name" value="mtIF2_IVc"/>
    <property type="match status" value="1"/>
</dbReference>
<dbReference type="FunFam" id="2.40.30.10:FF:000007">
    <property type="entry name" value="Translation initiation factor IF-2"/>
    <property type="match status" value="1"/>
</dbReference>
<dbReference type="FunFam" id="2.40.30.10:FF:000008">
    <property type="entry name" value="Translation initiation factor IF-2"/>
    <property type="match status" value="1"/>
</dbReference>
<dbReference type="FunFam" id="3.40.50.10050:FF:000001">
    <property type="entry name" value="Translation initiation factor IF-2"/>
    <property type="match status" value="1"/>
</dbReference>
<dbReference type="FunFam" id="3.40.50.300:FF:000019">
    <property type="entry name" value="Translation initiation factor IF-2"/>
    <property type="match status" value="1"/>
</dbReference>
<dbReference type="Gene3D" id="1.10.10.2480">
    <property type="match status" value="1"/>
</dbReference>
<dbReference type="Gene3D" id="3.40.50.300">
    <property type="entry name" value="P-loop containing nucleotide triphosphate hydrolases"/>
    <property type="match status" value="1"/>
</dbReference>
<dbReference type="Gene3D" id="2.40.30.10">
    <property type="entry name" value="Translation factors"/>
    <property type="match status" value="2"/>
</dbReference>
<dbReference type="Gene3D" id="3.40.50.10050">
    <property type="entry name" value="Translation initiation factor IF- 2, domain 3"/>
    <property type="match status" value="1"/>
</dbReference>
<dbReference type="HAMAP" id="MF_00100_B">
    <property type="entry name" value="IF_2_B"/>
    <property type="match status" value="1"/>
</dbReference>
<dbReference type="InterPro" id="IPR053905">
    <property type="entry name" value="EF-G-like_DII"/>
</dbReference>
<dbReference type="InterPro" id="IPR044145">
    <property type="entry name" value="IF2_II"/>
</dbReference>
<dbReference type="InterPro" id="IPR006847">
    <property type="entry name" value="IF2_N"/>
</dbReference>
<dbReference type="InterPro" id="IPR027417">
    <property type="entry name" value="P-loop_NTPase"/>
</dbReference>
<dbReference type="InterPro" id="IPR005225">
    <property type="entry name" value="Small_GTP-bd"/>
</dbReference>
<dbReference type="InterPro" id="IPR000795">
    <property type="entry name" value="T_Tr_GTP-bd_dom"/>
</dbReference>
<dbReference type="InterPro" id="IPR000178">
    <property type="entry name" value="TF_IF2_bacterial-like"/>
</dbReference>
<dbReference type="InterPro" id="IPR015760">
    <property type="entry name" value="TIF_IF2"/>
</dbReference>
<dbReference type="InterPro" id="IPR023115">
    <property type="entry name" value="TIF_IF2_dom3"/>
</dbReference>
<dbReference type="InterPro" id="IPR036925">
    <property type="entry name" value="TIF_IF2_dom3_sf"/>
</dbReference>
<dbReference type="InterPro" id="IPR009000">
    <property type="entry name" value="Transl_B-barrel_sf"/>
</dbReference>
<dbReference type="NCBIfam" id="TIGR00487">
    <property type="entry name" value="IF-2"/>
    <property type="match status" value="1"/>
</dbReference>
<dbReference type="NCBIfam" id="TIGR00231">
    <property type="entry name" value="small_GTP"/>
    <property type="match status" value="1"/>
</dbReference>
<dbReference type="PANTHER" id="PTHR43381:SF5">
    <property type="entry name" value="TR-TYPE G DOMAIN-CONTAINING PROTEIN"/>
    <property type="match status" value="1"/>
</dbReference>
<dbReference type="PANTHER" id="PTHR43381">
    <property type="entry name" value="TRANSLATION INITIATION FACTOR IF-2-RELATED"/>
    <property type="match status" value="1"/>
</dbReference>
<dbReference type="Pfam" id="PF22042">
    <property type="entry name" value="EF-G_D2"/>
    <property type="match status" value="1"/>
</dbReference>
<dbReference type="Pfam" id="PF00009">
    <property type="entry name" value="GTP_EFTU"/>
    <property type="match status" value="1"/>
</dbReference>
<dbReference type="Pfam" id="PF11987">
    <property type="entry name" value="IF-2"/>
    <property type="match status" value="1"/>
</dbReference>
<dbReference type="Pfam" id="PF04760">
    <property type="entry name" value="IF2_N"/>
    <property type="match status" value="2"/>
</dbReference>
<dbReference type="SUPFAM" id="SSF52156">
    <property type="entry name" value="Initiation factor IF2/eIF5b, domain 3"/>
    <property type="match status" value="1"/>
</dbReference>
<dbReference type="SUPFAM" id="SSF52540">
    <property type="entry name" value="P-loop containing nucleoside triphosphate hydrolases"/>
    <property type="match status" value="1"/>
</dbReference>
<dbReference type="SUPFAM" id="SSF50447">
    <property type="entry name" value="Translation proteins"/>
    <property type="match status" value="2"/>
</dbReference>
<dbReference type="PROSITE" id="PS51722">
    <property type="entry name" value="G_TR_2"/>
    <property type="match status" value="1"/>
</dbReference>
<dbReference type="PROSITE" id="PS01176">
    <property type="entry name" value="IF2"/>
    <property type="match status" value="1"/>
</dbReference>
<reference key="1">
    <citation type="journal article" date="2004" name="J. Mol. Microbiol. Biotechnol.">
        <title>The complete genome sequence of Bacillus licheniformis DSM13, an organism with great industrial potential.</title>
        <authorList>
            <person name="Veith B."/>
            <person name="Herzberg C."/>
            <person name="Steckel S."/>
            <person name="Feesche J."/>
            <person name="Maurer K.H."/>
            <person name="Ehrenreich P."/>
            <person name="Baeumer S."/>
            <person name="Henne A."/>
            <person name="Liesegang H."/>
            <person name="Merkl R."/>
            <person name="Ehrenreich A."/>
            <person name="Gottschalk G."/>
        </authorList>
    </citation>
    <scope>NUCLEOTIDE SEQUENCE [LARGE SCALE GENOMIC DNA]</scope>
    <source>
        <strain>ATCC 14580 / DSM 13 / JCM 2505 / CCUG 7422 / NBRC 12200 / NCIMB 9375 / NCTC 10341 / NRRL NRS-1264 / Gibson 46</strain>
    </source>
</reference>
<reference key="2">
    <citation type="journal article" date="2004" name="Genome Biol.">
        <title>Complete genome sequence of the industrial bacterium Bacillus licheniformis and comparisons with closely related Bacillus species.</title>
        <authorList>
            <person name="Rey M.W."/>
            <person name="Ramaiya P."/>
            <person name="Nelson B.A."/>
            <person name="Brody-Karpin S.D."/>
            <person name="Zaretsky E.J."/>
            <person name="Tang M."/>
            <person name="Lopez de Leon A."/>
            <person name="Xiang H."/>
            <person name="Gusti V."/>
            <person name="Clausen I.G."/>
            <person name="Olsen P.B."/>
            <person name="Rasmussen M.D."/>
            <person name="Andersen J.T."/>
            <person name="Joergensen P.L."/>
            <person name="Larsen T.S."/>
            <person name="Sorokin A."/>
            <person name="Bolotin A."/>
            <person name="Lapidus A."/>
            <person name="Galleron N."/>
            <person name="Ehrlich S.D."/>
            <person name="Berka R.M."/>
        </authorList>
    </citation>
    <scope>NUCLEOTIDE SEQUENCE [LARGE SCALE GENOMIC DNA]</scope>
    <source>
        <strain>ATCC 14580 / DSM 13 / JCM 2505 / CCUG 7422 / NBRC 12200 / NCIMB 9375 / NCTC 10341 / NRRL NRS-1264 / Gibson 46</strain>
    </source>
</reference>
<protein>
    <recommendedName>
        <fullName evidence="2">Translation initiation factor IF-2</fullName>
    </recommendedName>
</protein>
<keyword id="KW-0963">Cytoplasm</keyword>
<keyword id="KW-0342">GTP-binding</keyword>
<keyword id="KW-0396">Initiation factor</keyword>
<keyword id="KW-0547">Nucleotide-binding</keyword>
<keyword id="KW-0648">Protein biosynthesis</keyword>
<keyword id="KW-1185">Reference proteome</keyword>
<organism>
    <name type="scientific">Bacillus licheniformis (strain ATCC 14580 / DSM 13 / JCM 2505 / CCUG 7422 / NBRC 12200 / NCIMB 9375 / NCTC 10341 / NRRL NRS-1264 / Gibson 46)</name>
    <dbReference type="NCBI Taxonomy" id="279010"/>
    <lineage>
        <taxon>Bacteria</taxon>
        <taxon>Bacillati</taxon>
        <taxon>Bacillota</taxon>
        <taxon>Bacilli</taxon>
        <taxon>Bacillales</taxon>
        <taxon>Bacillaceae</taxon>
        <taxon>Bacillus</taxon>
    </lineage>
</organism>
<evidence type="ECO:0000250" key="1"/>
<evidence type="ECO:0000255" key="2">
    <source>
        <dbReference type="HAMAP-Rule" id="MF_00100"/>
    </source>
</evidence>
<evidence type="ECO:0000256" key="3">
    <source>
        <dbReference type="SAM" id="MobiDB-lite"/>
    </source>
</evidence>
<gene>
    <name evidence="2" type="primary">infB</name>
    <name type="ordered locus">BLi01888</name>
    <name type="ordered locus">BL01224</name>
</gene>